<organism>
    <name type="scientific">Bacillus anthracis</name>
    <dbReference type="NCBI Taxonomy" id="1392"/>
    <lineage>
        <taxon>Bacteria</taxon>
        <taxon>Bacillati</taxon>
        <taxon>Bacillota</taxon>
        <taxon>Bacilli</taxon>
        <taxon>Bacillales</taxon>
        <taxon>Bacillaceae</taxon>
        <taxon>Bacillus</taxon>
        <taxon>Bacillus cereus group</taxon>
    </lineage>
</organism>
<comment type="function">
    <text evidence="1">Cell wall formation. Catalyzes the transfer of a GlcNAc subunit on undecaprenyl-pyrophosphoryl-MurNAc-pentapeptide (lipid intermediate I) to form undecaprenyl-pyrophosphoryl-MurNAc-(pentapeptide)GlcNAc (lipid intermediate II).</text>
</comment>
<comment type="catalytic activity">
    <reaction evidence="1">
        <text>di-trans,octa-cis-undecaprenyl diphospho-N-acetyl-alpha-D-muramoyl-L-alanyl-D-glutamyl-meso-2,6-diaminopimeloyl-D-alanyl-D-alanine + UDP-N-acetyl-alpha-D-glucosamine = di-trans,octa-cis-undecaprenyl diphospho-[N-acetyl-alpha-D-glucosaminyl-(1-&gt;4)]-N-acetyl-alpha-D-muramoyl-L-alanyl-D-glutamyl-meso-2,6-diaminopimeloyl-D-alanyl-D-alanine + UDP + H(+)</text>
        <dbReference type="Rhea" id="RHEA:31227"/>
        <dbReference type="ChEBI" id="CHEBI:15378"/>
        <dbReference type="ChEBI" id="CHEBI:57705"/>
        <dbReference type="ChEBI" id="CHEBI:58223"/>
        <dbReference type="ChEBI" id="CHEBI:61387"/>
        <dbReference type="ChEBI" id="CHEBI:61388"/>
        <dbReference type="EC" id="2.4.1.227"/>
    </reaction>
</comment>
<comment type="pathway">
    <text evidence="1">Cell wall biogenesis; peptidoglycan biosynthesis.</text>
</comment>
<comment type="subcellular location">
    <subcellularLocation>
        <location evidence="1">Cell membrane</location>
        <topology evidence="1">Peripheral membrane protein</topology>
        <orientation evidence="1">Cytoplasmic side</orientation>
    </subcellularLocation>
</comment>
<comment type="similarity">
    <text evidence="1">Belongs to the glycosyltransferase 28 family. MurG subfamily.</text>
</comment>
<name>MURG2_BACAN</name>
<gene>
    <name evidence="1" type="primary">murG2</name>
    <name type="synonym">murG-2</name>
    <name type="ordered locus">BA_4477</name>
    <name type="ordered locus">GBAA_4477</name>
    <name type="ordered locus">BAS4155</name>
</gene>
<keyword id="KW-0131">Cell cycle</keyword>
<keyword id="KW-0132">Cell division</keyword>
<keyword id="KW-1003">Cell membrane</keyword>
<keyword id="KW-0133">Cell shape</keyword>
<keyword id="KW-0961">Cell wall biogenesis/degradation</keyword>
<keyword id="KW-0328">Glycosyltransferase</keyword>
<keyword id="KW-0472">Membrane</keyword>
<keyword id="KW-0573">Peptidoglycan synthesis</keyword>
<keyword id="KW-1185">Reference proteome</keyword>
<keyword id="KW-0808">Transferase</keyword>
<sequence>MKKIVFTGGGSAGHVTPNLAIIPYLKEDNWDISYIGSHQGIEKTIIEKEDIPYYSIASGKLRRYFDLKNIKDPFLVMKGVMDAYVRIRKLKPDVIFSKGGFVSVPVVIGGWLNRVPVLLHESDMTPGLANKIALRFASKIFVTFEEAAKHLPKEKVIYTGSPVREEVLKGDREKALAFLGFSRKKPVITIMGGSLGAKKINETVREALPELLRKYQIVHLCGKGNLDDSLQNKEGYRQFEYVHGELPDILAITDFVISRAGSNAIFEFLTLQKPMLLIPLSKFASRGDQILNAESFERQGYASVLYEEDVTVNSLIKHVEELSHNNEAYKTALKKYNGKEAIQTIIHHISEA</sequence>
<dbReference type="EC" id="2.4.1.227" evidence="1"/>
<dbReference type="EMBL" id="AE016879">
    <property type="protein sequence ID" value="AAP28188.1"/>
    <property type="molecule type" value="Genomic_DNA"/>
</dbReference>
<dbReference type="EMBL" id="AE017334">
    <property type="protein sequence ID" value="AAT33595.1"/>
    <property type="molecule type" value="Genomic_DNA"/>
</dbReference>
<dbReference type="EMBL" id="AE017225">
    <property type="protein sequence ID" value="AAT56455.1"/>
    <property type="molecule type" value="Genomic_DNA"/>
</dbReference>
<dbReference type="RefSeq" id="NP_846702.1">
    <property type="nucleotide sequence ID" value="NC_003997.3"/>
</dbReference>
<dbReference type="RefSeq" id="YP_030404.1">
    <property type="nucleotide sequence ID" value="NC_005945.1"/>
</dbReference>
<dbReference type="SMR" id="Q81JE6"/>
<dbReference type="STRING" id="261594.GBAA_4477"/>
<dbReference type="CAZy" id="GT28">
    <property type="family name" value="Glycosyltransferase Family 28"/>
</dbReference>
<dbReference type="DNASU" id="1087934"/>
<dbReference type="GeneID" id="45024132"/>
<dbReference type="KEGG" id="ban:BA_4477"/>
<dbReference type="KEGG" id="banh:HYU01_21840"/>
<dbReference type="KEGG" id="bar:GBAA_4477"/>
<dbReference type="KEGG" id="bat:BAS4155"/>
<dbReference type="PATRIC" id="fig|198094.11.peg.4445"/>
<dbReference type="eggNOG" id="COG0707">
    <property type="taxonomic scope" value="Bacteria"/>
</dbReference>
<dbReference type="HOGENOM" id="CLU_037404_0_0_9"/>
<dbReference type="OMA" id="AADMMLC"/>
<dbReference type="OrthoDB" id="9808936at2"/>
<dbReference type="UniPathway" id="UPA00219"/>
<dbReference type="Proteomes" id="UP000000427">
    <property type="component" value="Chromosome"/>
</dbReference>
<dbReference type="Proteomes" id="UP000000594">
    <property type="component" value="Chromosome"/>
</dbReference>
<dbReference type="GO" id="GO:0005886">
    <property type="term" value="C:plasma membrane"/>
    <property type="evidence" value="ECO:0007669"/>
    <property type="project" value="UniProtKB-SubCell"/>
</dbReference>
<dbReference type="GO" id="GO:0051991">
    <property type="term" value="F:UDP-N-acetyl-D-glucosamine:N-acetylmuramoyl-L-alanyl-D-glutamyl-meso-2,6-diaminopimelyl-D-alanyl-D-alanine-diphosphoundecaprenol 4-beta-N-acetylglucosaminlytransferase activity"/>
    <property type="evidence" value="ECO:0007669"/>
    <property type="project" value="RHEA"/>
</dbReference>
<dbReference type="GO" id="GO:0050511">
    <property type="term" value="F:undecaprenyldiphospho-muramoylpentapeptide beta-N-acetylglucosaminyltransferase activity"/>
    <property type="evidence" value="ECO:0007669"/>
    <property type="project" value="UniProtKB-UniRule"/>
</dbReference>
<dbReference type="GO" id="GO:0005975">
    <property type="term" value="P:carbohydrate metabolic process"/>
    <property type="evidence" value="ECO:0007669"/>
    <property type="project" value="InterPro"/>
</dbReference>
<dbReference type="GO" id="GO:0051301">
    <property type="term" value="P:cell division"/>
    <property type="evidence" value="ECO:0007669"/>
    <property type="project" value="UniProtKB-KW"/>
</dbReference>
<dbReference type="GO" id="GO:0071555">
    <property type="term" value="P:cell wall organization"/>
    <property type="evidence" value="ECO:0007669"/>
    <property type="project" value="UniProtKB-KW"/>
</dbReference>
<dbReference type="GO" id="GO:0030259">
    <property type="term" value="P:lipid glycosylation"/>
    <property type="evidence" value="ECO:0007669"/>
    <property type="project" value="UniProtKB-UniRule"/>
</dbReference>
<dbReference type="GO" id="GO:0009252">
    <property type="term" value="P:peptidoglycan biosynthetic process"/>
    <property type="evidence" value="ECO:0007669"/>
    <property type="project" value="UniProtKB-UniRule"/>
</dbReference>
<dbReference type="GO" id="GO:0008360">
    <property type="term" value="P:regulation of cell shape"/>
    <property type="evidence" value="ECO:0007669"/>
    <property type="project" value="UniProtKB-KW"/>
</dbReference>
<dbReference type="CDD" id="cd03785">
    <property type="entry name" value="GT28_MurG"/>
    <property type="match status" value="1"/>
</dbReference>
<dbReference type="Gene3D" id="3.40.50.2000">
    <property type="entry name" value="Glycogen Phosphorylase B"/>
    <property type="match status" value="2"/>
</dbReference>
<dbReference type="HAMAP" id="MF_00033">
    <property type="entry name" value="MurG"/>
    <property type="match status" value="1"/>
</dbReference>
<dbReference type="InterPro" id="IPR006009">
    <property type="entry name" value="GlcNAc_MurG"/>
</dbReference>
<dbReference type="InterPro" id="IPR007235">
    <property type="entry name" value="Glyco_trans_28_C"/>
</dbReference>
<dbReference type="InterPro" id="IPR004276">
    <property type="entry name" value="GlycoTrans_28_N"/>
</dbReference>
<dbReference type="NCBIfam" id="TIGR01133">
    <property type="entry name" value="murG"/>
    <property type="match status" value="1"/>
</dbReference>
<dbReference type="NCBIfam" id="NF009102">
    <property type="entry name" value="PRK12446.1"/>
    <property type="match status" value="1"/>
</dbReference>
<dbReference type="PANTHER" id="PTHR21015:SF27">
    <property type="entry name" value="UDP-N-ACETYLGLUCOSAMINE--N-ACETYLMURAMYL-(PENTAPEPTIDE) PYROPHOSPHORYL-UNDECAPRENOL N-ACETYLGLUCOSAMINE TRANSFERASE"/>
    <property type="match status" value="1"/>
</dbReference>
<dbReference type="PANTHER" id="PTHR21015">
    <property type="entry name" value="UDP-N-ACETYLGLUCOSAMINE--N-ACETYLMURAMYL-(PENTAPEPTIDE) PYROPHOSPHORYL-UNDECAPRENOL N-ACETYLGLUCOSAMINE TRANSFERASE 1"/>
    <property type="match status" value="1"/>
</dbReference>
<dbReference type="Pfam" id="PF04101">
    <property type="entry name" value="Glyco_tran_28_C"/>
    <property type="match status" value="1"/>
</dbReference>
<dbReference type="Pfam" id="PF03033">
    <property type="entry name" value="Glyco_transf_28"/>
    <property type="match status" value="1"/>
</dbReference>
<dbReference type="SUPFAM" id="SSF53756">
    <property type="entry name" value="UDP-Glycosyltransferase/glycogen phosphorylase"/>
    <property type="match status" value="1"/>
</dbReference>
<protein>
    <recommendedName>
        <fullName evidence="1">UDP-N-acetylglucosamine--N-acetylmuramyl-(pentapeptide) pyrophosphoryl-undecaprenol N-acetylglucosamine transferase 2</fullName>
        <ecNumber evidence="1">2.4.1.227</ecNumber>
    </recommendedName>
    <alternativeName>
        <fullName evidence="1">Undecaprenyl-PP-MurNAc-pentapeptide-UDPGlcNAc GlcNAc transferase 2</fullName>
    </alternativeName>
</protein>
<accession>Q81JE6</accession>
<accession>Q6HTD4</accession>
<accession>Q6KMM6</accession>
<reference key="1">
    <citation type="journal article" date="2003" name="Nature">
        <title>The genome sequence of Bacillus anthracis Ames and comparison to closely related bacteria.</title>
        <authorList>
            <person name="Read T.D."/>
            <person name="Peterson S.N."/>
            <person name="Tourasse N.J."/>
            <person name="Baillie L.W."/>
            <person name="Paulsen I.T."/>
            <person name="Nelson K.E."/>
            <person name="Tettelin H."/>
            <person name="Fouts D.E."/>
            <person name="Eisen J.A."/>
            <person name="Gill S.R."/>
            <person name="Holtzapple E.K."/>
            <person name="Okstad O.A."/>
            <person name="Helgason E."/>
            <person name="Rilstone J."/>
            <person name="Wu M."/>
            <person name="Kolonay J.F."/>
            <person name="Beanan M.J."/>
            <person name="Dodson R.J."/>
            <person name="Brinkac L.M."/>
            <person name="Gwinn M.L."/>
            <person name="DeBoy R.T."/>
            <person name="Madpu R."/>
            <person name="Daugherty S.C."/>
            <person name="Durkin A.S."/>
            <person name="Haft D.H."/>
            <person name="Nelson W.C."/>
            <person name="Peterson J.D."/>
            <person name="Pop M."/>
            <person name="Khouri H.M."/>
            <person name="Radune D."/>
            <person name="Benton J.L."/>
            <person name="Mahamoud Y."/>
            <person name="Jiang L."/>
            <person name="Hance I.R."/>
            <person name="Weidman J.F."/>
            <person name="Berry K.J."/>
            <person name="Plaut R.D."/>
            <person name="Wolf A.M."/>
            <person name="Watkins K.L."/>
            <person name="Nierman W.C."/>
            <person name="Hazen A."/>
            <person name="Cline R.T."/>
            <person name="Redmond C."/>
            <person name="Thwaite J.E."/>
            <person name="White O."/>
            <person name="Salzberg S.L."/>
            <person name="Thomason B."/>
            <person name="Friedlander A.M."/>
            <person name="Koehler T.M."/>
            <person name="Hanna P.C."/>
            <person name="Kolstoe A.-B."/>
            <person name="Fraser C.M."/>
        </authorList>
    </citation>
    <scope>NUCLEOTIDE SEQUENCE [LARGE SCALE GENOMIC DNA]</scope>
    <source>
        <strain>Ames / isolate Porton</strain>
    </source>
</reference>
<reference key="2">
    <citation type="journal article" date="2009" name="J. Bacteriol.">
        <title>The complete genome sequence of Bacillus anthracis Ames 'Ancestor'.</title>
        <authorList>
            <person name="Ravel J."/>
            <person name="Jiang L."/>
            <person name="Stanley S.T."/>
            <person name="Wilson M.R."/>
            <person name="Decker R.S."/>
            <person name="Read T.D."/>
            <person name="Worsham P."/>
            <person name="Keim P.S."/>
            <person name="Salzberg S.L."/>
            <person name="Fraser-Liggett C.M."/>
            <person name="Rasko D.A."/>
        </authorList>
    </citation>
    <scope>NUCLEOTIDE SEQUENCE [LARGE SCALE GENOMIC DNA]</scope>
    <source>
        <strain>Ames ancestor</strain>
    </source>
</reference>
<reference key="3">
    <citation type="submission" date="2004-01" db="EMBL/GenBank/DDBJ databases">
        <title>Complete genome sequence of Bacillus anthracis Sterne.</title>
        <authorList>
            <person name="Brettin T.S."/>
            <person name="Bruce D."/>
            <person name="Challacombe J.F."/>
            <person name="Gilna P."/>
            <person name="Han C."/>
            <person name="Hill K."/>
            <person name="Hitchcock P."/>
            <person name="Jackson P."/>
            <person name="Keim P."/>
            <person name="Longmire J."/>
            <person name="Lucas S."/>
            <person name="Okinaka R."/>
            <person name="Richardson P."/>
            <person name="Rubin E."/>
            <person name="Tice H."/>
        </authorList>
    </citation>
    <scope>NUCLEOTIDE SEQUENCE [LARGE SCALE GENOMIC DNA]</scope>
    <source>
        <strain>Sterne</strain>
    </source>
</reference>
<feature type="chain" id="PRO_0000109139" description="UDP-N-acetylglucosamine--N-acetylmuramyl-(pentapeptide) pyrophosphoryl-undecaprenol N-acetylglucosamine transferase 2">
    <location>
        <begin position="1"/>
        <end position="352"/>
    </location>
</feature>
<feature type="binding site" evidence="1">
    <location>
        <begin position="11"/>
        <end position="13"/>
    </location>
    <ligand>
        <name>UDP-N-acetyl-alpha-D-glucosamine</name>
        <dbReference type="ChEBI" id="CHEBI:57705"/>
    </ligand>
</feature>
<feature type="binding site" evidence="1">
    <location>
        <position position="164"/>
    </location>
    <ligand>
        <name>UDP-N-acetyl-alpha-D-glucosamine</name>
        <dbReference type="ChEBI" id="CHEBI:57705"/>
    </ligand>
</feature>
<feature type="binding site" evidence="1">
    <location>
        <position position="194"/>
    </location>
    <ligand>
        <name>UDP-N-acetyl-alpha-D-glucosamine</name>
        <dbReference type="ChEBI" id="CHEBI:57705"/>
    </ligand>
</feature>
<feature type="binding site" evidence="1">
    <location>
        <position position="289"/>
    </location>
    <ligand>
        <name>UDP-N-acetyl-alpha-D-glucosamine</name>
        <dbReference type="ChEBI" id="CHEBI:57705"/>
    </ligand>
</feature>
<proteinExistence type="inferred from homology"/>
<evidence type="ECO:0000255" key="1">
    <source>
        <dbReference type="HAMAP-Rule" id="MF_00033"/>
    </source>
</evidence>